<protein>
    <recommendedName>
        <fullName evidence="1">Global transcriptional regulator Spx</fullName>
    </recommendedName>
</protein>
<keyword id="KW-0963">Cytoplasm</keyword>
<keyword id="KW-1015">Disulfide bond</keyword>
<keyword id="KW-0676">Redox-active center</keyword>
<keyword id="KW-0804">Transcription</keyword>
<keyword id="KW-0805">Transcription regulation</keyword>
<evidence type="ECO:0000255" key="1">
    <source>
        <dbReference type="HAMAP-Rule" id="MF_01132"/>
    </source>
</evidence>
<comment type="function">
    <text evidence="1">Global transcriptional regulator that plays a key role in stress response and exerts either positive or negative regulation of genes. Acts by interacting with the C-terminal domain of the alpha subunit of the RNA polymerase (RNAP). This interaction can enhance binding of RNAP to the promoter region of target genes and stimulate their transcription, or block interaction of RNAP with activator.</text>
</comment>
<comment type="subunit">
    <text evidence="1">Interacts with the C-terminal domain of the alpha subunit of the RNAP.</text>
</comment>
<comment type="subcellular location">
    <subcellularLocation>
        <location evidence="1">Cytoplasm</location>
    </subcellularLocation>
</comment>
<comment type="similarity">
    <text evidence="1">Belongs to the ArsC family. Spx subfamily.</text>
</comment>
<dbReference type="EMBL" id="BA000017">
    <property type="protein sequence ID" value="BAB57159.1"/>
    <property type="molecule type" value="Genomic_DNA"/>
</dbReference>
<dbReference type="SMR" id="P60378"/>
<dbReference type="KEGG" id="sav:SAV0997"/>
<dbReference type="HOGENOM" id="CLU_116644_1_1_9"/>
<dbReference type="PhylomeDB" id="P60378"/>
<dbReference type="PHI-base" id="PHI:7702"/>
<dbReference type="Proteomes" id="UP000002481">
    <property type="component" value="Chromosome"/>
</dbReference>
<dbReference type="GO" id="GO:0005737">
    <property type="term" value="C:cytoplasm"/>
    <property type="evidence" value="ECO:0007669"/>
    <property type="project" value="UniProtKB-SubCell"/>
</dbReference>
<dbReference type="GO" id="GO:0045892">
    <property type="term" value="P:negative regulation of DNA-templated transcription"/>
    <property type="evidence" value="ECO:0007669"/>
    <property type="project" value="InterPro"/>
</dbReference>
<dbReference type="CDD" id="cd03032">
    <property type="entry name" value="ArsC_Spx"/>
    <property type="match status" value="1"/>
</dbReference>
<dbReference type="Gene3D" id="3.40.30.10">
    <property type="entry name" value="Glutaredoxin"/>
    <property type="match status" value="1"/>
</dbReference>
<dbReference type="HAMAP" id="MF_01132">
    <property type="entry name" value="Spx"/>
    <property type="match status" value="1"/>
</dbReference>
<dbReference type="InterPro" id="IPR006660">
    <property type="entry name" value="Arsenate_reductase-like"/>
</dbReference>
<dbReference type="InterPro" id="IPR023731">
    <property type="entry name" value="Spx"/>
</dbReference>
<dbReference type="InterPro" id="IPR036249">
    <property type="entry name" value="Thioredoxin-like_sf"/>
</dbReference>
<dbReference type="InterPro" id="IPR006504">
    <property type="entry name" value="Tscrpt_reg_Spx/MgsR"/>
</dbReference>
<dbReference type="NCBIfam" id="TIGR01617">
    <property type="entry name" value="arsC_related"/>
    <property type="match status" value="1"/>
</dbReference>
<dbReference type="NCBIfam" id="NF002459">
    <property type="entry name" value="PRK01655.1"/>
    <property type="match status" value="1"/>
</dbReference>
<dbReference type="NCBIfam" id="NF009210">
    <property type="entry name" value="PRK12559.1"/>
    <property type="match status" value="1"/>
</dbReference>
<dbReference type="PANTHER" id="PTHR30041">
    <property type="entry name" value="ARSENATE REDUCTASE"/>
    <property type="match status" value="1"/>
</dbReference>
<dbReference type="PANTHER" id="PTHR30041:SF7">
    <property type="entry name" value="GLOBAL TRANSCRIPTIONAL REGULATOR SPX"/>
    <property type="match status" value="1"/>
</dbReference>
<dbReference type="Pfam" id="PF03960">
    <property type="entry name" value="ArsC"/>
    <property type="match status" value="1"/>
</dbReference>
<dbReference type="SUPFAM" id="SSF52833">
    <property type="entry name" value="Thioredoxin-like"/>
    <property type="match status" value="1"/>
</dbReference>
<dbReference type="PROSITE" id="PS51353">
    <property type="entry name" value="ARSC"/>
    <property type="match status" value="1"/>
</dbReference>
<accession>P60378</accession>
<accession>Q99V93</accession>
<proteinExistence type="inferred from homology"/>
<name>SPX_STAAM</name>
<organism>
    <name type="scientific">Staphylococcus aureus (strain Mu50 / ATCC 700699)</name>
    <dbReference type="NCBI Taxonomy" id="158878"/>
    <lineage>
        <taxon>Bacteria</taxon>
        <taxon>Bacillati</taxon>
        <taxon>Bacillota</taxon>
        <taxon>Bacilli</taxon>
        <taxon>Bacillales</taxon>
        <taxon>Staphylococcaceae</taxon>
        <taxon>Staphylococcus</taxon>
    </lineage>
</organism>
<gene>
    <name evidence="1" type="primary">spx</name>
    <name type="ordered locus">SAV0997</name>
</gene>
<feature type="chain" id="PRO_0000162563" description="Global transcriptional regulator Spx">
    <location>
        <begin position="1"/>
        <end position="131"/>
    </location>
</feature>
<feature type="disulfide bond" description="Redox-active" evidence="1">
    <location>
        <begin position="10"/>
        <end position="13"/>
    </location>
</feature>
<reference key="1">
    <citation type="journal article" date="2001" name="Lancet">
        <title>Whole genome sequencing of meticillin-resistant Staphylococcus aureus.</title>
        <authorList>
            <person name="Kuroda M."/>
            <person name="Ohta T."/>
            <person name="Uchiyama I."/>
            <person name="Baba T."/>
            <person name="Yuzawa H."/>
            <person name="Kobayashi I."/>
            <person name="Cui L."/>
            <person name="Oguchi A."/>
            <person name="Aoki K."/>
            <person name="Nagai Y."/>
            <person name="Lian J.-Q."/>
            <person name="Ito T."/>
            <person name="Kanamori M."/>
            <person name="Matsumaru H."/>
            <person name="Maruyama A."/>
            <person name="Murakami H."/>
            <person name="Hosoyama A."/>
            <person name="Mizutani-Ui Y."/>
            <person name="Takahashi N.K."/>
            <person name="Sawano T."/>
            <person name="Inoue R."/>
            <person name="Kaito C."/>
            <person name="Sekimizu K."/>
            <person name="Hirakawa H."/>
            <person name="Kuhara S."/>
            <person name="Goto S."/>
            <person name="Yabuzaki J."/>
            <person name="Kanehisa M."/>
            <person name="Yamashita A."/>
            <person name="Oshima K."/>
            <person name="Furuya K."/>
            <person name="Yoshino C."/>
            <person name="Shiba T."/>
            <person name="Hattori M."/>
            <person name="Ogasawara N."/>
            <person name="Hayashi H."/>
            <person name="Hiramatsu K."/>
        </authorList>
    </citation>
    <scope>NUCLEOTIDE SEQUENCE [LARGE SCALE GENOMIC DNA]</scope>
    <source>
        <strain>Mu50 / ATCC 700699</strain>
    </source>
</reference>
<sequence length="131" mass="15441">MVTLFTSPSCTSCRKAKAWLQEHDIPYTERNIFSEHLTIDEIKQILKMTEDGTDEIISTRSKTYQKLNVDIDSLPLQDLYSIIQDNPGLLRRPIILDNKRLQVGYNEDEIRRFLPRKVRTFQLQEAQRMVD</sequence>